<sequence length="331" mass="37173">MRCSQREVFVKREEPTNPEWGKPPSQRTADEYIRHSFVILDKPRGPSSHEVAAWVKKILGVERAGHAGTLDPKVSGVLPIAVAEGTKVLMALSRSDKVYVAVAKFHGDVDEERLRAVLREFQGEIYQKPPLRSAVKRQLRTRRVFSLELLELEGRYAVIKMHVEAGTYARKIIHDIGEVLGVGANMRELRRVAVTCFTEDEAVTLQDVADAYYIWKKYGDDTYLRSVLLPIEEIARHLPKIWVRDSAVDAVCHGAPLAAPGISKFEVPFSKGDIVAMFTLKGELVGIGRALVDSEEVKKMERGAVVRTDRVVMRRGTYPAMWKKGQRAAKT</sequence>
<reference key="1">
    <citation type="submission" date="2007-04" db="EMBL/GenBank/DDBJ databases">
        <title>Complete sequence of Pyrobaculum arsenaticum DSM 13514.</title>
        <authorList>
            <consortium name="US DOE Joint Genome Institute"/>
            <person name="Copeland A."/>
            <person name="Lucas S."/>
            <person name="Lapidus A."/>
            <person name="Barry K."/>
            <person name="Glavina del Rio T."/>
            <person name="Dalin E."/>
            <person name="Tice H."/>
            <person name="Pitluck S."/>
            <person name="Chain P."/>
            <person name="Malfatti S."/>
            <person name="Shin M."/>
            <person name="Vergez L."/>
            <person name="Schmutz J."/>
            <person name="Larimer F."/>
            <person name="Land M."/>
            <person name="Hauser L."/>
            <person name="Kyrpides N."/>
            <person name="Mikhailova N."/>
            <person name="Cozen A.E."/>
            <person name="Fitz-Gibbon S.T."/>
            <person name="House C.H."/>
            <person name="Saltikov C."/>
            <person name="Lowe T.M."/>
            <person name="Richardson P."/>
        </authorList>
    </citation>
    <scope>NUCLEOTIDE SEQUENCE [LARGE SCALE GENOMIC DNA]</scope>
    <source>
        <strain>ATCC 700994 / DSM 13514 / JCM 11321 / PZ6</strain>
    </source>
</reference>
<comment type="function">
    <text evidence="1">Could be responsible for synthesis of pseudouridine from uracil-55 in the psi GC loop of transfer RNAs.</text>
</comment>
<comment type="catalytic activity">
    <reaction evidence="1">
        <text>uridine(55) in tRNA = pseudouridine(55) in tRNA</text>
        <dbReference type="Rhea" id="RHEA:42532"/>
        <dbReference type="Rhea" id="RHEA-COMP:10101"/>
        <dbReference type="Rhea" id="RHEA-COMP:10102"/>
        <dbReference type="ChEBI" id="CHEBI:65314"/>
        <dbReference type="ChEBI" id="CHEBI:65315"/>
        <dbReference type="EC" id="5.4.99.25"/>
    </reaction>
</comment>
<comment type="similarity">
    <text evidence="1">Belongs to the pseudouridine synthase TruB family. Type 2 subfamily.</text>
</comment>
<accession>A4WH37</accession>
<protein>
    <recommendedName>
        <fullName evidence="1">Probable tRNA pseudouridine synthase B</fullName>
        <ecNumber evidence="1">5.4.99.25</ecNumber>
    </recommendedName>
    <alternativeName>
        <fullName evidence="1">tRNA pseudouridine(55) synthase</fullName>
        <shortName evidence="1">Psi55 synthase</shortName>
    </alternativeName>
    <alternativeName>
        <fullName evidence="1">tRNA pseudouridylate synthase</fullName>
    </alternativeName>
    <alternativeName>
        <fullName evidence="1">tRNA-uridine isomerase</fullName>
    </alternativeName>
</protein>
<feature type="chain" id="PRO_1000084724" description="Probable tRNA pseudouridine synthase B">
    <location>
        <begin position="1"/>
        <end position="331"/>
    </location>
</feature>
<feature type="domain" description="PUA" evidence="1">
    <location>
        <begin position="238"/>
        <end position="313"/>
    </location>
</feature>
<feature type="region of interest" description="Disordered" evidence="2">
    <location>
        <begin position="1"/>
        <end position="27"/>
    </location>
</feature>
<feature type="compositionally biased region" description="Basic and acidic residues" evidence="2">
    <location>
        <begin position="1"/>
        <end position="15"/>
    </location>
</feature>
<feature type="active site" description="Nucleophile" evidence="1">
    <location>
        <position position="71"/>
    </location>
</feature>
<organism>
    <name type="scientific">Pyrobaculum arsenaticum (strain DSM 13514 / JCM 11321 / PZ6)</name>
    <dbReference type="NCBI Taxonomy" id="340102"/>
    <lineage>
        <taxon>Archaea</taxon>
        <taxon>Thermoproteota</taxon>
        <taxon>Thermoprotei</taxon>
        <taxon>Thermoproteales</taxon>
        <taxon>Thermoproteaceae</taxon>
        <taxon>Pyrobaculum</taxon>
    </lineage>
</organism>
<gene>
    <name evidence="1" type="primary">truB</name>
    <name type="ordered locus">Pars_0089</name>
</gene>
<name>TRUB_PYRAR</name>
<evidence type="ECO:0000255" key="1">
    <source>
        <dbReference type="HAMAP-Rule" id="MF_01081"/>
    </source>
</evidence>
<evidence type="ECO:0000256" key="2">
    <source>
        <dbReference type="SAM" id="MobiDB-lite"/>
    </source>
</evidence>
<dbReference type="EC" id="5.4.99.25" evidence="1"/>
<dbReference type="EMBL" id="CP000660">
    <property type="protein sequence ID" value="ABP49704.1"/>
    <property type="molecule type" value="Genomic_DNA"/>
</dbReference>
<dbReference type="RefSeq" id="WP_011899612.1">
    <property type="nucleotide sequence ID" value="NC_009376.1"/>
</dbReference>
<dbReference type="SMR" id="A4WH37"/>
<dbReference type="STRING" id="340102.Pars_0089"/>
<dbReference type="GeneID" id="5054298"/>
<dbReference type="KEGG" id="pas:Pars_0089"/>
<dbReference type="HOGENOM" id="CLU_032087_3_0_2"/>
<dbReference type="OrthoDB" id="35866at2157"/>
<dbReference type="PhylomeDB" id="A4WH37"/>
<dbReference type="Proteomes" id="UP000001567">
    <property type="component" value="Chromosome"/>
</dbReference>
<dbReference type="GO" id="GO:0003723">
    <property type="term" value="F:RNA binding"/>
    <property type="evidence" value="ECO:0007669"/>
    <property type="project" value="InterPro"/>
</dbReference>
<dbReference type="GO" id="GO:0160148">
    <property type="term" value="F:tRNA pseudouridine(55) synthase activity"/>
    <property type="evidence" value="ECO:0007669"/>
    <property type="project" value="UniProtKB-EC"/>
</dbReference>
<dbReference type="GO" id="GO:0000495">
    <property type="term" value="P:box H/ACA sno(s)RNA 3'-end processing"/>
    <property type="evidence" value="ECO:0007669"/>
    <property type="project" value="TreeGrafter"/>
</dbReference>
<dbReference type="GO" id="GO:1990481">
    <property type="term" value="P:mRNA pseudouridine synthesis"/>
    <property type="evidence" value="ECO:0007669"/>
    <property type="project" value="TreeGrafter"/>
</dbReference>
<dbReference type="GO" id="GO:0031118">
    <property type="term" value="P:rRNA pseudouridine synthesis"/>
    <property type="evidence" value="ECO:0007669"/>
    <property type="project" value="TreeGrafter"/>
</dbReference>
<dbReference type="GO" id="GO:0031120">
    <property type="term" value="P:snRNA pseudouridine synthesis"/>
    <property type="evidence" value="ECO:0007669"/>
    <property type="project" value="TreeGrafter"/>
</dbReference>
<dbReference type="GO" id="GO:0031119">
    <property type="term" value="P:tRNA pseudouridine synthesis"/>
    <property type="evidence" value="ECO:0007669"/>
    <property type="project" value="UniProtKB-UniRule"/>
</dbReference>
<dbReference type="CDD" id="cd21148">
    <property type="entry name" value="PUA_Cbf5"/>
    <property type="match status" value="1"/>
</dbReference>
<dbReference type="FunFam" id="3.30.2350.10:FF:000001">
    <property type="entry name" value="H/ACA ribonucleoprotein complex subunit CBF5"/>
    <property type="match status" value="1"/>
</dbReference>
<dbReference type="Gene3D" id="3.30.2350.10">
    <property type="entry name" value="Pseudouridine synthase"/>
    <property type="match status" value="1"/>
</dbReference>
<dbReference type="Gene3D" id="2.30.130.10">
    <property type="entry name" value="PUA domain"/>
    <property type="match status" value="1"/>
</dbReference>
<dbReference type="HAMAP" id="MF_01081">
    <property type="entry name" value="TruB_arch"/>
    <property type="match status" value="1"/>
</dbReference>
<dbReference type="InterPro" id="IPR012960">
    <property type="entry name" value="Dyskerin-like"/>
</dbReference>
<dbReference type="InterPro" id="IPR020103">
    <property type="entry name" value="PsdUridine_synth_cat_dom_sf"/>
</dbReference>
<dbReference type="InterPro" id="IPR002501">
    <property type="entry name" value="PsdUridine_synth_N"/>
</dbReference>
<dbReference type="InterPro" id="IPR002478">
    <property type="entry name" value="PUA"/>
</dbReference>
<dbReference type="InterPro" id="IPR015947">
    <property type="entry name" value="PUA-like_sf"/>
</dbReference>
<dbReference type="InterPro" id="IPR036974">
    <property type="entry name" value="PUA_sf"/>
</dbReference>
<dbReference type="InterPro" id="IPR004802">
    <property type="entry name" value="tRNA_PsdUridine_synth_B_fam"/>
</dbReference>
<dbReference type="InterPro" id="IPR026326">
    <property type="entry name" value="TruB_arch"/>
</dbReference>
<dbReference type="InterPro" id="IPR032819">
    <property type="entry name" value="TruB_C"/>
</dbReference>
<dbReference type="InterPro" id="IPR004521">
    <property type="entry name" value="Uncharacterised_CHP00451"/>
</dbReference>
<dbReference type="NCBIfam" id="TIGR00425">
    <property type="entry name" value="CBF5"/>
    <property type="match status" value="1"/>
</dbReference>
<dbReference type="NCBIfam" id="NF003280">
    <property type="entry name" value="PRK04270.1"/>
    <property type="match status" value="1"/>
</dbReference>
<dbReference type="NCBIfam" id="TIGR00451">
    <property type="entry name" value="unchar_dom_2"/>
    <property type="match status" value="1"/>
</dbReference>
<dbReference type="PANTHER" id="PTHR23127">
    <property type="entry name" value="CENTROMERE/MICROTUBULE BINDING PROTEIN CBF5"/>
    <property type="match status" value="1"/>
</dbReference>
<dbReference type="PANTHER" id="PTHR23127:SF0">
    <property type="entry name" value="H_ACA RIBONUCLEOPROTEIN COMPLEX SUBUNIT DKC1"/>
    <property type="match status" value="1"/>
</dbReference>
<dbReference type="Pfam" id="PF08068">
    <property type="entry name" value="DKCLD"/>
    <property type="match status" value="1"/>
</dbReference>
<dbReference type="Pfam" id="PF01472">
    <property type="entry name" value="PUA"/>
    <property type="match status" value="1"/>
</dbReference>
<dbReference type="Pfam" id="PF16198">
    <property type="entry name" value="TruB_C_2"/>
    <property type="match status" value="1"/>
</dbReference>
<dbReference type="Pfam" id="PF01509">
    <property type="entry name" value="TruB_N"/>
    <property type="match status" value="1"/>
</dbReference>
<dbReference type="SMART" id="SM01136">
    <property type="entry name" value="DKCLD"/>
    <property type="match status" value="1"/>
</dbReference>
<dbReference type="SMART" id="SM00359">
    <property type="entry name" value="PUA"/>
    <property type="match status" value="1"/>
</dbReference>
<dbReference type="SUPFAM" id="SSF55120">
    <property type="entry name" value="Pseudouridine synthase"/>
    <property type="match status" value="1"/>
</dbReference>
<dbReference type="SUPFAM" id="SSF88697">
    <property type="entry name" value="PUA domain-like"/>
    <property type="match status" value="1"/>
</dbReference>
<dbReference type="PROSITE" id="PS50890">
    <property type="entry name" value="PUA"/>
    <property type="match status" value="1"/>
</dbReference>
<keyword id="KW-0413">Isomerase</keyword>
<keyword id="KW-0819">tRNA processing</keyword>
<proteinExistence type="inferred from homology"/>